<protein>
    <recommendedName>
        <fullName>RNA-binding protein YhbY</fullName>
    </recommendedName>
</protein>
<feature type="chain" id="PRO_0000202166" description="RNA-binding protein YhbY">
    <location>
        <begin position="1"/>
        <end position="97"/>
    </location>
</feature>
<feature type="domain" description="CRM" evidence="1">
    <location>
        <begin position="1"/>
        <end position="97"/>
    </location>
</feature>
<sequence length="97" mass="10784">MNLSTKQKQHLKGLAHPLKPVVLLGSNGLTEGVLAEIEQALEHHELIKVKIATEDRETKTLIVEAIVRETGACNVQVIGKTLVLYRPTKERKISLPR</sequence>
<reference key="1">
    <citation type="journal article" date="2002" name="Nucleic Acids Res.">
        <title>Genome sequence of Shigella flexneri 2a: insights into pathogenicity through comparison with genomes of Escherichia coli K12 and O157.</title>
        <authorList>
            <person name="Jin Q."/>
            <person name="Yuan Z."/>
            <person name="Xu J."/>
            <person name="Wang Y."/>
            <person name="Shen Y."/>
            <person name="Lu W."/>
            <person name="Wang J."/>
            <person name="Liu H."/>
            <person name="Yang J."/>
            <person name="Yang F."/>
            <person name="Zhang X."/>
            <person name="Zhang J."/>
            <person name="Yang G."/>
            <person name="Wu H."/>
            <person name="Qu D."/>
            <person name="Dong J."/>
            <person name="Sun L."/>
            <person name="Xue Y."/>
            <person name="Zhao A."/>
            <person name="Gao Y."/>
            <person name="Zhu J."/>
            <person name="Kan B."/>
            <person name="Ding K."/>
            <person name="Chen S."/>
            <person name="Cheng H."/>
            <person name="Yao Z."/>
            <person name="He B."/>
            <person name="Chen R."/>
            <person name="Ma D."/>
            <person name="Qiang B."/>
            <person name="Wen Y."/>
            <person name="Hou Y."/>
            <person name="Yu J."/>
        </authorList>
    </citation>
    <scope>NUCLEOTIDE SEQUENCE [LARGE SCALE GENOMIC DNA]</scope>
    <source>
        <strain>301 / Serotype 2a</strain>
    </source>
</reference>
<reference key="2">
    <citation type="journal article" date="2003" name="Infect. Immun.">
        <title>Complete genome sequence and comparative genomics of Shigella flexneri serotype 2a strain 2457T.</title>
        <authorList>
            <person name="Wei J."/>
            <person name="Goldberg M.B."/>
            <person name="Burland V."/>
            <person name="Venkatesan M.M."/>
            <person name="Deng W."/>
            <person name="Fournier G."/>
            <person name="Mayhew G.F."/>
            <person name="Plunkett G. III"/>
            <person name="Rose D.J."/>
            <person name="Darling A."/>
            <person name="Mau B."/>
            <person name="Perna N.T."/>
            <person name="Payne S.M."/>
            <person name="Runyen-Janecky L.J."/>
            <person name="Zhou S."/>
            <person name="Schwartz D.C."/>
            <person name="Blattner F.R."/>
        </authorList>
    </citation>
    <scope>NUCLEOTIDE SEQUENCE [LARGE SCALE GENOMIC DNA]</scope>
    <source>
        <strain>ATCC 700930 / 2457T / Serotype 2a</strain>
    </source>
</reference>
<organism>
    <name type="scientific">Shigella flexneri</name>
    <dbReference type="NCBI Taxonomy" id="623"/>
    <lineage>
        <taxon>Bacteria</taxon>
        <taxon>Pseudomonadati</taxon>
        <taxon>Pseudomonadota</taxon>
        <taxon>Gammaproteobacteria</taxon>
        <taxon>Enterobacterales</taxon>
        <taxon>Enterobacteriaceae</taxon>
        <taxon>Shigella</taxon>
    </lineage>
</organism>
<name>YHBY_SHIFL</name>
<dbReference type="EMBL" id="AE005674">
    <property type="protein sequence ID" value="AAN44686.1"/>
    <property type="molecule type" value="Genomic_DNA"/>
</dbReference>
<dbReference type="EMBL" id="AE014073">
    <property type="protein sequence ID" value="AAP18500.1"/>
    <property type="molecule type" value="Genomic_DNA"/>
</dbReference>
<dbReference type="RefSeq" id="NP_708979.1">
    <property type="nucleotide sequence ID" value="NC_004337.2"/>
</dbReference>
<dbReference type="RefSeq" id="WP_001054420.1">
    <property type="nucleotide sequence ID" value="NZ_WPGW01000004.1"/>
</dbReference>
<dbReference type="SMR" id="P0AGK7"/>
<dbReference type="STRING" id="198214.SF3220"/>
<dbReference type="PaxDb" id="198214-SF3220"/>
<dbReference type="GeneID" id="1027149"/>
<dbReference type="GeneID" id="93778801"/>
<dbReference type="KEGG" id="sfl:SF3220"/>
<dbReference type="KEGG" id="sfx:S3438"/>
<dbReference type="PATRIC" id="fig|198214.7.peg.3820"/>
<dbReference type="HOGENOM" id="CLU_095994_2_0_6"/>
<dbReference type="Proteomes" id="UP000001006">
    <property type="component" value="Chromosome"/>
</dbReference>
<dbReference type="Proteomes" id="UP000002673">
    <property type="component" value="Chromosome"/>
</dbReference>
<dbReference type="GO" id="GO:0003723">
    <property type="term" value="F:RNA binding"/>
    <property type="evidence" value="ECO:0007669"/>
    <property type="project" value="UniProtKB-KW"/>
</dbReference>
<dbReference type="FunFam" id="3.30.110.60:FF:000001">
    <property type="entry name" value="RNA-binding protein YhbY"/>
    <property type="match status" value="1"/>
</dbReference>
<dbReference type="Gene3D" id="3.30.110.60">
    <property type="entry name" value="YhbY-like"/>
    <property type="match status" value="1"/>
</dbReference>
<dbReference type="InterPro" id="IPR001890">
    <property type="entry name" value="RNA-binding_CRM"/>
</dbReference>
<dbReference type="InterPro" id="IPR051925">
    <property type="entry name" value="RNA-binding_domain"/>
</dbReference>
<dbReference type="InterPro" id="IPR017924">
    <property type="entry name" value="RNA-binding_YhbY"/>
</dbReference>
<dbReference type="InterPro" id="IPR035920">
    <property type="entry name" value="YhbY-like_sf"/>
</dbReference>
<dbReference type="NCBIfam" id="NF007669">
    <property type="entry name" value="PRK10343.1"/>
    <property type="match status" value="1"/>
</dbReference>
<dbReference type="NCBIfam" id="TIGR00253">
    <property type="entry name" value="RNA_bind_YhbY"/>
    <property type="match status" value="1"/>
</dbReference>
<dbReference type="PANTHER" id="PTHR40065">
    <property type="entry name" value="RNA-BINDING PROTEIN YHBY"/>
    <property type="match status" value="1"/>
</dbReference>
<dbReference type="PANTHER" id="PTHR40065:SF3">
    <property type="entry name" value="RNA-BINDING PROTEIN YHBY"/>
    <property type="match status" value="1"/>
</dbReference>
<dbReference type="Pfam" id="PF01985">
    <property type="entry name" value="CRS1_YhbY"/>
    <property type="match status" value="1"/>
</dbReference>
<dbReference type="SMART" id="SM01103">
    <property type="entry name" value="CRS1_YhbY"/>
    <property type="match status" value="1"/>
</dbReference>
<dbReference type="SUPFAM" id="SSF75471">
    <property type="entry name" value="YhbY-like"/>
    <property type="match status" value="1"/>
</dbReference>
<dbReference type="PROSITE" id="PS51295">
    <property type="entry name" value="CRM"/>
    <property type="match status" value="1"/>
</dbReference>
<keyword id="KW-1185">Reference proteome</keyword>
<keyword id="KW-0694">RNA-binding</keyword>
<proteinExistence type="predicted"/>
<evidence type="ECO:0000255" key="1">
    <source>
        <dbReference type="PROSITE-ProRule" id="PRU00626"/>
    </source>
</evidence>
<accession>P0AGK7</accession>
<accession>P42550</accession>
<gene>
    <name type="primary">yhbY</name>
    <name type="ordered locus">SF3220</name>
    <name type="ordered locus">S3438</name>
</gene>